<reference key="1">
    <citation type="journal article" date="2002" name="Nature">
        <title>The genome sequence of Schizosaccharomyces pombe.</title>
        <authorList>
            <person name="Wood V."/>
            <person name="Gwilliam R."/>
            <person name="Rajandream M.A."/>
            <person name="Lyne M.H."/>
            <person name="Lyne R."/>
            <person name="Stewart A."/>
            <person name="Sgouros J.G."/>
            <person name="Peat N."/>
            <person name="Hayles J."/>
            <person name="Baker S.G."/>
            <person name="Basham D."/>
            <person name="Bowman S."/>
            <person name="Brooks K."/>
            <person name="Brown D."/>
            <person name="Brown S."/>
            <person name="Chillingworth T."/>
            <person name="Churcher C.M."/>
            <person name="Collins M."/>
            <person name="Connor R."/>
            <person name="Cronin A."/>
            <person name="Davis P."/>
            <person name="Feltwell T."/>
            <person name="Fraser A."/>
            <person name="Gentles S."/>
            <person name="Goble A."/>
            <person name="Hamlin N."/>
            <person name="Harris D.E."/>
            <person name="Hidalgo J."/>
            <person name="Hodgson G."/>
            <person name="Holroyd S."/>
            <person name="Hornsby T."/>
            <person name="Howarth S."/>
            <person name="Huckle E.J."/>
            <person name="Hunt S."/>
            <person name="Jagels K."/>
            <person name="James K.D."/>
            <person name="Jones L."/>
            <person name="Jones M."/>
            <person name="Leather S."/>
            <person name="McDonald S."/>
            <person name="McLean J."/>
            <person name="Mooney P."/>
            <person name="Moule S."/>
            <person name="Mungall K.L."/>
            <person name="Murphy L.D."/>
            <person name="Niblett D."/>
            <person name="Odell C."/>
            <person name="Oliver K."/>
            <person name="O'Neil S."/>
            <person name="Pearson D."/>
            <person name="Quail M.A."/>
            <person name="Rabbinowitsch E."/>
            <person name="Rutherford K.M."/>
            <person name="Rutter S."/>
            <person name="Saunders D."/>
            <person name="Seeger K."/>
            <person name="Sharp S."/>
            <person name="Skelton J."/>
            <person name="Simmonds M.N."/>
            <person name="Squares R."/>
            <person name="Squares S."/>
            <person name="Stevens K."/>
            <person name="Taylor K."/>
            <person name="Taylor R.G."/>
            <person name="Tivey A."/>
            <person name="Walsh S.V."/>
            <person name="Warren T."/>
            <person name="Whitehead S."/>
            <person name="Woodward J.R."/>
            <person name="Volckaert G."/>
            <person name="Aert R."/>
            <person name="Robben J."/>
            <person name="Grymonprez B."/>
            <person name="Weltjens I."/>
            <person name="Vanstreels E."/>
            <person name="Rieger M."/>
            <person name="Schaefer M."/>
            <person name="Mueller-Auer S."/>
            <person name="Gabel C."/>
            <person name="Fuchs M."/>
            <person name="Duesterhoeft A."/>
            <person name="Fritzc C."/>
            <person name="Holzer E."/>
            <person name="Moestl D."/>
            <person name="Hilbert H."/>
            <person name="Borzym K."/>
            <person name="Langer I."/>
            <person name="Beck A."/>
            <person name="Lehrach H."/>
            <person name="Reinhardt R."/>
            <person name="Pohl T.M."/>
            <person name="Eger P."/>
            <person name="Zimmermann W."/>
            <person name="Wedler H."/>
            <person name="Wambutt R."/>
            <person name="Purnelle B."/>
            <person name="Goffeau A."/>
            <person name="Cadieu E."/>
            <person name="Dreano S."/>
            <person name="Gloux S."/>
            <person name="Lelaure V."/>
            <person name="Mottier S."/>
            <person name="Galibert F."/>
            <person name="Aves S.J."/>
            <person name="Xiang Z."/>
            <person name="Hunt C."/>
            <person name="Moore K."/>
            <person name="Hurst S.M."/>
            <person name="Lucas M."/>
            <person name="Rochet M."/>
            <person name="Gaillardin C."/>
            <person name="Tallada V.A."/>
            <person name="Garzon A."/>
            <person name="Thode G."/>
            <person name="Daga R.R."/>
            <person name="Cruzado L."/>
            <person name="Jimenez J."/>
            <person name="Sanchez M."/>
            <person name="del Rey F."/>
            <person name="Benito J."/>
            <person name="Dominguez A."/>
            <person name="Revuelta J.L."/>
            <person name="Moreno S."/>
            <person name="Armstrong J."/>
            <person name="Forsburg S.L."/>
            <person name="Cerutti L."/>
            <person name="Lowe T."/>
            <person name="McCombie W.R."/>
            <person name="Paulsen I."/>
            <person name="Potashkin J."/>
            <person name="Shpakovski G.V."/>
            <person name="Ussery D."/>
            <person name="Barrell B.G."/>
            <person name="Nurse P."/>
        </authorList>
    </citation>
    <scope>NUCLEOTIDE SEQUENCE [LARGE SCALE GENOMIC DNA]</scope>
    <source>
        <strain>972 / ATCC 24843</strain>
    </source>
</reference>
<reference key="2">
    <citation type="journal article" date="2001" name="J. Biol. Chem.">
        <title>Rapamycin blocks sexual development in fission yeast through inhibition of the cellular function of an FKBP12 homolog.</title>
        <authorList>
            <person name="Weisman R."/>
            <person name="Finkelstein S."/>
            <person name="Choder M."/>
        </authorList>
    </citation>
    <scope>FUNCTION</scope>
</reference>
<reference key="3">
    <citation type="journal article" date="2006" name="Nat. Biotechnol.">
        <title>ORFeome cloning and global analysis of protein localization in the fission yeast Schizosaccharomyces pombe.</title>
        <authorList>
            <person name="Matsuyama A."/>
            <person name="Arai R."/>
            <person name="Yashiroda Y."/>
            <person name="Shirai A."/>
            <person name="Kamata A."/>
            <person name="Sekido S."/>
            <person name="Kobayashi Y."/>
            <person name="Hashimoto A."/>
            <person name="Hamamoto M."/>
            <person name="Hiraoka Y."/>
            <person name="Horinouchi S."/>
            <person name="Yoshida M."/>
        </authorList>
    </citation>
    <scope>SUBCELLULAR LOCATION [LARGE SCALE ANALYSIS]</scope>
</reference>
<name>FKBP_SCHPO</name>
<gene>
    <name type="primary">fkh1</name>
    <name type="ORF">SPBC24E9.17c</name>
    <name type="ORF">SPBC839.17c</name>
</gene>
<keyword id="KW-0963">Cytoplasm</keyword>
<keyword id="KW-0413">Isomerase</keyword>
<keyword id="KW-0539">Nucleus</keyword>
<keyword id="KW-1185">Reference proteome</keyword>
<keyword id="KW-0697">Rotamase</keyword>
<proteinExistence type="inferred from homology"/>
<organism>
    <name type="scientific">Schizosaccharomyces pombe (strain 972 / ATCC 24843)</name>
    <name type="common">Fission yeast</name>
    <dbReference type="NCBI Taxonomy" id="284812"/>
    <lineage>
        <taxon>Eukaryota</taxon>
        <taxon>Fungi</taxon>
        <taxon>Dikarya</taxon>
        <taxon>Ascomycota</taxon>
        <taxon>Taphrinomycotina</taxon>
        <taxon>Schizosaccharomycetes</taxon>
        <taxon>Schizosaccharomycetales</taxon>
        <taxon>Schizosaccharomycetaceae</taxon>
        <taxon>Schizosaccharomyces</taxon>
    </lineage>
</organism>
<accession>O42993</accession>
<dbReference type="EC" id="5.2.1.8"/>
<dbReference type="EMBL" id="CU329671">
    <property type="protein sequence ID" value="CAB46710.1"/>
    <property type="molecule type" value="Genomic_DNA"/>
</dbReference>
<dbReference type="PIR" id="T40724">
    <property type="entry name" value="T40724"/>
</dbReference>
<dbReference type="RefSeq" id="NP_595257.1">
    <property type="nucleotide sequence ID" value="NM_001021163.2"/>
</dbReference>
<dbReference type="SMR" id="O42993"/>
<dbReference type="BioGRID" id="277709">
    <property type="interactions" value="13"/>
</dbReference>
<dbReference type="FunCoup" id="O42993">
    <property type="interactions" value="163"/>
</dbReference>
<dbReference type="STRING" id="284812.O42993"/>
<dbReference type="iPTMnet" id="O42993"/>
<dbReference type="PaxDb" id="4896-SPBC839.17c.1"/>
<dbReference type="EnsemblFungi" id="SPBC839.17c.1">
    <property type="protein sequence ID" value="SPBC839.17c.1:pep"/>
    <property type="gene ID" value="SPBC839.17c"/>
</dbReference>
<dbReference type="GeneID" id="2541195"/>
<dbReference type="KEGG" id="spo:2541195"/>
<dbReference type="PomBase" id="SPBC839.17c">
    <property type="gene designation" value="fkh1"/>
</dbReference>
<dbReference type="VEuPathDB" id="FungiDB:SPBC839.17c"/>
<dbReference type="eggNOG" id="KOG0544">
    <property type="taxonomic scope" value="Eukaryota"/>
</dbReference>
<dbReference type="HOGENOM" id="CLU_013615_12_1_1"/>
<dbReference type="InParanoid" id="O42993"/>
<dbReference type="OMA" id="FTQATMG"/>
<dbReference type="PhylomeDB" id="O42993"/>
<dbReference type="Reactome" id="R-SPO-166208">
    <property type="pathway name" value="mTORC1-mediated signalling"/>
</dbReference>
<dbReference type="Reactome" id="R-SPO-2025928">
    <property type="pathway name" value="Calcineurin activates NFAT"/>
</dbReference>
<dbReference type="PRO" id="PR:O42993"/>
<dbReference type="Proteomes" id="UP000002485">
    <property type="component" value="Chromosome II"/>
</dbReference>
<dbReference type="GO" id="GO:0005737">
    <property type="term" value="C:cytoplasm"/>
    <property type="evidence" value="ECO:0000318"/>
    <property type="project" value="GO_Central"/>
</dbReference>
<dbReference type="GO" id="GO:0005829">
    <property type="term" value="C:cytosol"/>
    <property type="evidence" value="ECO:0007005"/>
    <property type="project" value="PomBase"/>
</dbReference>
<dbReference type="GO" id="GO:0005634">
    <property type="term" value="C:nucleus"/>
    <property type="evidence" value="ECO:0007005"/>
    <property type="project" value="PomBase"/>
</dbReference>
<dbReference type="GO" id="GO:0003755">
    <property type="term" value="F:peptidyl-prolyl cis-trans isomerase activity"/>
    <property type="evidence" value="ECO:0000318"/>
    <property type="project" value="GO_Central"/>
</dbReference>
<dbReference type="GO" id="GO:0000747">
    <property type="term" value="P:conjugation with cellular fusion"/>
    <property type="evidence" value="ECO:0000315"/>
    <property type="project" value="PomBase"/>
</dbReference>
<dbReference type="FunFam" id="3.10.50.40:FF:000025">
    <property type="entry name" value="Peptidylprolyl isomerase"/>
    <property type="match status" value="1"/>
</dbReference>
<dbReference type="Gene3D" id="3.10.50.40">
    <property type="match status" value="1"/>
</dbReference>
<dbReference type="InterPro" id="IPR050689">
    <property type="entry name" value="FKBP-type_PPIase"/>
</dbReference>
<dbReference type="InterPro" id="IPR046357">
    <property type="entry name" value="PPIase_dom_sf"/>
</dbReference>
<dbReference type="InterPro" id="IPR001179">
    <property type="entry name" value="PPIase_FKBP_dom"/>
</dbReference>
<dbReference type="PANTHER" id="PTHR10516:SF443">
    <property type="entry name" value="FK506-BINDING PROTEIN 59-RELATED"/>
    <property type="match status" value="1"/>
</dbReference>
<dbReference type="PANTHER" id="PTHR10516">
    <property type="entry name" value="PEPTIDYL-PROLYL CIS-TRANS ISOMERASE"/>
    <property type="match status" value="1"/>
</dbReference>
<dbReference type="Pfam" id="PF00254">
    <property type="entry name" value="FKBP_C"/>
    <property type="match status" value="1"/>
</dbReference>
<dbReference type="SUPFAM" id="SSF54534">
    <property type="entry name" value="FKBP-like"/>
    <property type="match status" value="1"/>
</dbReference>
<dbReference type="PROSITE" id="PS50059">
    <property type="entry name" value="FKBP_PPIASE"/>
    <property type="match status" value="1"/>
</dbReference>
<comment type="function">
    <text evidence="3">PPIases accelerate the folding of proteins. It catalyzes the cis-trans isomerization of proline imidic peptide bonds in oligopeptides. Has an important role in sexual development and serves as the target for rapamycin action.</text>
</comment>
<comment type="catalytic activity">
    <reaction>
        <text>[protein]-peptidylproline (omega=180) = [protein]-peptidylproline (omega=0)</text>
        <dbReference type="Rhea" id="RHEA:16237"/>
        <dbReference type="Rhea" id="RHEA-COMP:10747"/>
        <dbReference type="Rhea" id="RHEA-COMP:10748"/>
        <dbReference type="ChEBI" id="CHEBI:83833"/>
        <dbReference type="ChEBI" id="CHEBI:83834"/>
        <dbReference type="EC" id="5.2.1.8"/>
    </reaction>
</comment>
<comment type="subcellular location">
    <subcellularLocation>
        <location evidence="4">Cytoplasm</location>
    </subcellularLocation>
    <subcellularLocation>
        <location evidence="4">Nucleus</location>
    </subcellularLocation>
</comment>
<comment type="miscellaneous">
    <text>Binds to the immunosuppressant drug FK506.</text>
</comment>
<comment type="similarity">
    <text evidence="5">Belongs to the FKBP-type PPIase family. FKBP1 subfamily.</text>
</comment>
<evidence type="ECO:0000255" key="1">
    <source>
        <dbReference type="PROSITE-ProRule" id="PRU00277"/>
    </source>
</evidence>
<evidence type="ECO:0000256" key="2">
    <source>
        <dbReference type="SAM" id="MobiDB-lite"/>
    </source>
</evidence>
<evidence type="ECO:0000269" key="3">
    <source>
    </source>
</evidence>
<evidence type="ECO:0000269" key="4">
    <source>
    </source>
</evidence>
<evidence type="ECO:0000305" key="5"/>
<feature type="chain" id="PRO_0000075304" description="Peptidyl-prolyl cis-trans isomerase">
    <location>
        <begin position="1"/>
        <end position="112"/>
    </location>
</feature>
<feature type="domain" description="PPIase FKBP-type" evidence="1">
    <location>
        <begin position="20"/>
        <end position="108"/>
    </location>
</feature>
<feature type="region of interest" description="Disordered" evidence="2">
    <location>
        <begin position="1"/>
        <end position="22"/>
    </location>
</feature>
<protein>
    <recommendedName>
        <fullName>Peptidyl-prolyl cis-trans isomerase</fullName>
        <shortName>PPIase</shortName>
        <ecNumber>5.2.1.8</ecNumber>
    </recommendedName>
    <alternativeName>
        <fullName>FK506-binding protein</fullName>
        <shortName>FKBP</shortName>
    </alternativeName>
</protein>
<sequence length="112" mass="12043">MGVEKQVISSGNGQDFPKPGDRITMHYTGTLTNGKKFDSSVDRGSPFVCTIGVGQLIRGWDEGVPKMSLGEKAKLTITPDYGYGPRGFPGLIPPNSTLLFDVELLAINDKKA</sequence>